<protein>
    <recommendedName>
        <fullName evidence="7">Alpha-aminoadipic semialdehyde synthase, mitochondrial</fullName>
    </recommendedName>
    <alternativeName>
        <fullName evidence="7">LKR/SDH</fullName>
    </alternativeName>
    <domain>
        <recommendedName>
            <fullName evidence="7">Lysine ketoglutarate reductase</fullName>
            <shortName evidence="5">LKR</shortName>
            <shortName evidence="5">LOR</shortName>
            <ecNumber evidence="4">1.5.1.8</ecNumber>
        </recommendedName>
    </domain>
    <domain>
        <recommendedName>
            <fullName evidence="7">Saccharopine dehydrogenase</fullName>
            <shortName evidence="5">SDH</shortName>
            <ecNumber evidence="4">1.5.1.9</ecNumber>
        </recommendedName>
    </domain>
</protein>
<evidence type="ECO:0000250" key="1">
    <source>
        <dbReference type="UniProtKB" id="Q9P4R4"/>
    </source>
</evidence>
<evidence type="ECO:0000250" key="2">
    <source>
        <dbReference type="UniProtKB" id="Q9UDR5"/>
    </source>
</evidence>
<evidence type="ECO:0000255" key="3"/>
<evidence type="ECO:0000269" key="4">
    <source>
    </source>
</evidence>
<evidence type="ECO:0000303" key="5">
    <source>
    </source>
</evidence>
<evidence type="ECO:0000305" key="6"/>
<evidence type="ECO:0000305" key="7">
    <source>
    </source>
</evidence>
<evidence type="ECO:0000312" key="8">
    <source>
        <dbReference type="MGI" id="MGI:1353573"/>
    </source>
</evidence>
<evidence type="ECO:0007744" key="9">
    <source>
    </source>
</evidence>
<evidence type="ECO:0007744" key="10">
    <source>
    </source>
</evidence>
<feature type="transit peptide" description="Mitochondrion" evidence="3">
    <location>
        <begin position="1"/>
        <end position="27"/>
    </location>
</feature>
<feature type="chain" id="PRO_0000001053" description="Alpha-aminoadipic semialdehyde synthase, mitochondrial">
    <location>
        <begin position="28"/>
        <end position="926"/>
    </location>
</feature>
<feature type="region of interest" description="Lysine-ketoglutarate reductase" evidence="5">
    <location>
        <begin position="28"/>
        <end position="455"/>
    </location>
</feature>
<feature type="region of interest" description="Saccharopine dehydrogenase" evidence="5">
    <location>
        <begin position="477"/>
        <end position="926"/>
    </location>
</feature>
<feature type="binding site" evidence="2">
    <location>
        <position position="488"/>
    </location>
    <ligand>
        <name>NAD(+)</name>
        <dbReference type="ChEBI" id="CHEBI:57540"/>
    </ligand>
</feature>
<feature type="binding site" evidence="2">
    <location>
        <position position="512"/>
    </location>
    <ligand>
        <name>NAD(+)</name>
        <dbReference type="ChEBI" id="CHEBI:57540"/>
    </ligand>
</feature>
<feature type="binding site" evidence="2">
    <location>
        <position position="516"/>
    </location>
    <ligand>
        <name>NAD(+)</name>
        <dbReference type="ChEBI" id="CHEBI:57540"/>
    </ligand>
</feature>
<feature type="binding site" evidence="2">
    <location>
        <position position="554"/>
    </location>
    <ligand>
        <name>NAD(+)</name>
        <dbReference type="ChEBI" id="CHEBI:57540"/>
    </ligand>
</feature>
<feature type="binding site" evidence="2">
    <location>
        <position position="576"/>
    </location>
    <ligand>
        <name>NAD(+)</name>
        <dbReference type="ChEBI" id="CHEBI:57540"/>
    </ligand>
</feature>
<feature type="binding site" evidence="1">
    <location>
        <begin position="577"/>
        <end position="578"/>
    </location>
    <ligand>
        <name>L-saccharopine</name>
        <dbReference type="ChEBI" id="CHEBI:57951"/>
    </ligand>
</feature>
<feature type="binding site" evidence="2">
    <location>
        <position position="577"/>
    </location>
    <ligand>
        <name>NAD(+)</name>
        <dbReference type="ChEBI" id="CHEBI:57540"/>
    </ligand>
</feature>
<feature type="binding site" evidence="2">
    <location>
        <position position="603"/>
    </location>
    <ligand>
        <name>NAD(+)</name>
        <dbReference type="ChEBI" id="CHEBI:57540"/>
    </ligand>
</feature>
<feature type="binding site" evidence="1">
    <location>
        <position position="604"/>
    </location>
    <ligand>
        <name>L-saccharopine</name>
        <dbReference type="ChEBI" id="CHEBI:57951"/>
    </ligand>
</feature>
<feature type="binding site" evidence="2">
    <location>
        <position position="604"/>
    </location>
    <ligand>
        <name>NAD(+)</name>
        <dbReference type="ChEBI" id="CHEBI:57540"/>
    </ligand>
</feature>
<feature type="binding site" evidence="2">
    <location>
        <position position="605"/>
    </location>
    <ligand>
        <name>NAD(+)</name>
        <dbReference type="ChEBI" id="CHEBI:57540"/>
    </ligand>
</feature>
<feature type="binding site" evidence="1">
    <location>
        <position position="703"/>
    </location>
    <ligand>
        <name>L-saccharopine</name>
        <dbReference type="ChEBI" id="CHEBI:57951"/>
    </ligand>
</feature>
<feature type="binding site" evidence="1">
    <location>
        <begin position="724"/>
        <end position="726"/>
    </location>
    <ligand>
        <name>L-saccharopine</name>
        <dbReference type="ChEBI" id="CHEBI:57951"/>
    </ligand>
</feature>
<feature type="modified residue" description="N6-acetyllysine" evidence="9">
    <location>
        <position position="48"/>
    </location>
</feature>
<feature type="modified residue" description="N6-acetyllysine" evidence="9">
    <location>
        <position position="52"/>
    </location>
</feature>
<feature type="modified residue" description="N6-acetyllysine" evidence="9">
    <location>
        <position position="56"/>
    </location>
</feature>
<feature type="modified residue" description="N6-acetyllysine; alternate" evidence="9">
    <location>
        <position position="93"/>
    </location>
</feature>
<feature type="modified residue" description="N6-succinyllysine; alternate" evidence="10">
    <location>
        <position position="93"/>
    </location>
</feature>
<feature type="modified residue" description="N6-acetyllysine" evidence="9">
    <location>
        <position position="128"/>
    </location>
</feature>
<feature type="modified residue" description="N6-acetyllysine; alternate" evidence="9">
    <location>
        <position position="138"/>
    </location>
</feature>
<feature type="modified residue" description="N6-succinyllysine; alternate" evidence="10">
    <location>
        <position position="138"/>
    </location>
</feature>
<feature type="modified residue" description="N6-succinyllysine" evidence="10">
    <location>
        <position position="274"/>
    </location>
</feature>
<feature type="modified residue" description="N6-acetyllysine; alternate" evidence="9">
    <location>
        <position position="286"/>
    </location>
</feature>
<feature type="modified residue" description="N6-succinyllysine; alternate" evidence="10">
    <location>
        <position position="286"/>
    </location>
</feature>
<feature type="modified residue" description="N6-succinyllysine" evidence="10">
    <location>
        <position position="333"/>
    </location>
</feature>
<feature type="modified residue" description="N6-acetyllysine; alternate" evidence="9">
    <location>
        <position position="458"/>
    </location>
</feature>
<feature type="modified residue" description="N6-succinyllysine; alternate" evidence="10">
    <location>
        <position position="458"/>
    </location>
</feature>
<feature type="modified residue" description="N6-acetyllysine; alternate" evidence="9">
    <location>
        <position position="523"/>
    </location>
</feature>
<feature type="modified residue" description="N6-succinyllysine; alternate" evidence="10">
    <location>
        <position position="523"/>
    </location>
</feature>
<feature type="modified residue" description="N6-acetyllysine; alternate" evidence="9">
    <location>
        <position position="535"/>
    </location>
</feature>
<feature type="modified residue" description="N6-succinyllysine; alternate" evidence="10">
    <location>
        <position position="535"/>
    </location>
</feature>
<feature type="modified residue" description="N6-acetyllysine; alternate" evidence="9">
    <location>
        <position position="584"/>
    </location>
</feature>
<feature type="modified residue" description="N6-succinyllysine; alternate" evidence="10">
    <location>
        <position position="584"/>
    </location>
</feature>
<feature type="modified residue" description="N6-acetyllysine" evidence="9">
    <location>
        <position position="707"/>
    </location>
</feature>
<feature type="modified residue" description="N6-succinyllysine" evidence="10">
    <location>
        <position position="732"/>
    </location>
</feature>
<feature type="modified residue" description="N6-acetyllysine" evidence="9">
    <location>
        <position position="739"/>
    </location>
</feature>
<feature type="modified residue" description="N6-acetyllysine; alternate" evidence="9">
    <location>
        <position position="761"/>
    </location>
</feature>
<feature type="modified residue" description="N6-succinyllysine; alternate" evidence="10">
    <location>
        <position position="761"/>
    </location>
</feature>
<feature type="modified residue" description="N6-acetyllysine" evidence="9">
    <location>
        <position position="778"/>
    </location>
</feature>
<feature type="modified residue" description="N6-acetyllysine" evidence="9">
    <location>
        <position position="780"/>
    </location>
</feature>
<feature type="sequence conflict" description="In Ref. 1; CAA12114." evidence="6" ref="1">
    <original>V</original>
    <variation>I</variation>
    <location>
        <position position="198"/>
    </location>
</feature>
<feature type="sequence conflict" description="In Ref. 1; CAA12114." evidence="6" ref="1">
    <original>L</original>
    <variation>A</variation>
    <location>
        <position position="851"/>
    </location>
</feature>
<organism>
    <name type="scientific">Mus musculus</name>
    <name type="common">Mouse</name>
    <dbReference type="NCBI Taxonomy" id="10090"/>
    <lineage>
        <taxon>Eukaryota</taxon>
        <taxon>Metazoa</taxon>
        <taxon>Chordata</taxon>
        <taxon>Craniata</taxon>
        <taxon>Vertebrata</taxon>
        <taxon>Euteleostomi</taxon>
        <taxon>Mammalia</taxon>
        <taxon>Eutheria</taxon>
        <taxon>Euarchontoglires</taxon>
        <taxon>Glires</taxon>
        <taxon>Rodentia</taxon>
        <taxon>Myomorpha</taxon>
        <taxon>Muroidea</taxon>
        <taxon>Muridae</taxon>
        <taxon>Murinae</taxon>
        <taxon>Mus</taxon>
        <taxon>Mus</taxon>
    </lineage>
</organism>
<comment type="function">
    <text evidence="4">Bifunctional enzyme that catalyzes the first two steps in lysine degradation.</text>
</comment>
<comment type="catalytic activity">
    <reaction evidence="4">
        <text>L-saccharopine + NADP(+) + H2O = L-lysine + 2-oxoglutarate + NADPH + H(+)</text>
        <dbReference type="Rhea" id="RHEA:19373"/>
        <dbReference type="ChEBI" id="CHEBI:15377"/>
        <dbReference type="ChEBI" id="CHEBI:15378"/>
        <dbReference type="ChEBI" id="CHEBI:16810"/>
        <dbReference type="ChEBI" id="CHEBI:32551"/>
        <dbReference type="ChEBI" id="CHEBI:57783"/>
        <dbReference type="ChEBI" id="CHEBI:57951"/>
        <dbReference type="ChEBI" id="CHEBI:58349"/>
        <dbReference type="EC" id="1.5.1.8"/>
    </reaction>
    <physiologicalReaction direction="right-to-left" evidence="4">
        <dbReference type="Rhea" id="RHEA:19375"/>
    </physiologicalReaction>
</comment>
<comment type="catalytic activity">
    <reaction evidence="4">
        <text>L-saccharopine + NAD(+) + H2O = (S)-2-amino-6-oxohexanoate + L-glutamate + NADH + H(+)</text>
        <dbReference type="Rhea" id="RHEA:24520"/>
        <dbReference type="ChEBI" id="CHEBI:15377"/>
        <dbReference type="ChEBI" id="CHEBI:15378"/>
        <dbReference type="ChEBI" id="CHEBI:29985"/>
        <dbReference type="ChEBI" id="CHEBI:57540"/>
        <dbReference type="ChEBI" id="CHEBI:57945"/>
        <dbReference type="ChEBI" id="CHEBI:57951"/>
        <dbReference type="ChEBI" id="CHEBI:58321"/>
        <dbReference type="EC" id="1.5.1.9"/>
    </reaction>
    <physiologicalReaction direction="left-to-right" evidence="4">
        <dbReference type="Rhea" id="RHEA:24521"/>
    </physiologicalReaction>
</comment>
<comment type="pathway">
    <text evidence="7">Amino-acid degradation; L-lysine degradation via saccharopine pathway; glutaryl-CoA from L-lysine: step 1/6.</text>
</comment>
<comment type="pathway">
    <text evidence="7">Amino-acid degradation; L-lysine degradation via saccharopine pathway; glutaryl-CoA from L-lysine: step 2/6.</text>
</comment>
<comment type="subunit">
    <text evidence="4">Homotetramer.</text>
</comment>
<comment type="subcellular location">
    <subcellularLocation>
        <location evidence="2">Mitochondrion</location>
    </subcellularLocation>
</comment>
<comment type="tissue specificity">
    <text evidence="4">Highly expressed in kidney and liver, very low expression is seen in heart, brain, spleen, lung, skeletal muscle and testis.</text>
</comment>
<comment type="induction">
    <text evidence="4">Induced by starvation.</text>
</comment>
<comment type="domain">
    <text evidence="5">The N-terminal and the C-terminal domains contain respectively the lysine ketoglutarate reductase and saccharopine dehydrogenase activity.</text>
</comment>
<comment type="similarity">
    <text evidence="6">In the N-terminal section; belongs to the AlaDH/PNT family.</text>
</comment>
<comment type="similarity">
    <text evidence="6">In the C-terminal section; belongs to the saccharopine dehydrogenase family.</text>
</comment>
<accession>Q99K67</accession>
<accession>Q9Z1I9</accession>
<sequence>MLRAQRPRLARLRACLSRGLHHKPVMALRREDVNAWERRAPLAPKHIKGITKLGYKVLIQPSNRRAIHDKEYVRAGGILQEDITEACLILGVKRPPEEKLMSKKTYAFFSHTIKAQEANMNLLDEVLKQEIRLIDYEKMVDHRGSRIVAFGQWAGVAGMINILHGMGLRLLALGHHTPFMHLGMAHNYRNSSQAVQAVRDAGYEISLGLMPKSIGPLTFVFTGTGNVSKGAQEVFNELPCEYVEPHELREVSKTGDLRKVYGTVLSRHHHLVRKTDGVYDPVEYEKYPERYTSRFNTDIAPYTTCLINGIYWEQNTPRLLTRQDAQSLLVPVKSSVVPVEGCPELPHKLVAICDISADTGGSIDFMTECTTIERPFCMYDADQQIIHDSVEGSGILMCSIDNLPAQLPIEATEYFGDMLYPYVEEMLLSDASQPLESQNFSPVVRDAVITSNGLLTDKYKYIQKLRESRERIQFLSMSTKKKVLVLGSGYVSGPVLEYLSRDNNIEITLGSDMTNQMQQLSKKYNINPVSLTVGKQEAKLQSLVESQDLVISLLPYVLHPVVAKACIESRVNMVTASYITPAMKELEKSVDDAGITVIGELGLDPGLDHMLAMETIDTAKELGATVESYVSYCGGLPAPEHSDNPLRYKFSWSPVGVLMNIMQPASYLLNGKVVNVTGGVSFLNSVTPMDYFPGLNLEGYPNRDSIKYAEIYGISSAHTLLRGTLRYKGYSKALNGFVKLGLINREAYPALRPEANPLTWKQLLCDLVGISRSSPCEKLKEVVFTKLGGDNTQLEAAEWLGLLGDEQVPQAESIVDAFSKHLVSKLSYGPEEKDMIVMRDSFGIRHPSGHLENKTIDLVVYGDFNGFSAMAKTVGLPTAMAAKMLLDGEIEAKGLMGPFTKEIYGPILERIKAEGIVFNTQSTIKL</sequence>
<reference key="1">
    <citation type="journal article" date="1999" name="Biochem. J.">
        <title>Lysine degradation through the saccharopine pathway in mammals: involvement of both bifunctional and monofunctional lysine-degrading enzymes in mouse.</title>
        <authorList>
            <person name="Papes F."/>
            <person name="Kemper E.L."/>
            <person name="Cord-Neto G."/>
            <person name="Langone F."/>
            <person name="Arruda P."/>
        </authorList>
    </citation>
    <scope>NUCLEOTIDE SEQUENCE [MRNA]</scope>
    <scope>FUNCTION</scope>
    <scope>CATALYTIC ACTIVITY</scope>
    <scope>PATHWAY</scope>
    <scope>SUBUNIT</scope>
    <scope>TISSUE SPECIFICITY</scope>
    <scope>INDUCTION</scope>
    <scope>DOMAIN</scope>
    <scope>REGION</scope>
    <source>
        <strain>C57BL/6J X CBA/J</strain>
        <tissue>Liver</tissue>
    </source>
</reference>
<reference key="2">
    <citation type="journal article" date="2004" name="Genome Res.">
        <title>The status, quality, and expansion of the NIH full-length cDNA project: the Mammalian Gene Collection (MGC).</title>
        <authorList>
            <consortium name="The MGC Project Team"/>
        </authorList>
    </citation>
    <scope>NUCLEOTIDE SEQUENCE [LARGE SCALE MRNA]</scope>
    <source>
        <tissue>Mammary tumor</tissue>
    </source>
</reference>
<reference key="3">
    <citation type="journal article" date="2010" name="Cell">
        <title>A tissue-specific atlas of mouse protein phosphorylation and expression.</title>
        <authorList>
            <person name="Huttlin E.L."/>
            <person name="Jedrychowski M.P."/>
            <person name="Elias J.E."/>
            <person name="Goswami T."/>
            <person name="Rad R."/>
            <person name="Beausoleil S.A."/>
            <person name="Villen J."/>
            <person name="Haas W."/>
            <person name="Sowa M.E."/>
            <person name="Gygi S.P."/>
        </authorList>
    </citation>
    <scope>IDENTIFICATION BY MASS SPECTROMETRY [LARGE SCALE ANALYSIS]</scope>
    <source>
        <tissue>Kidney</tissue>
        <tissue>Liver</tissue>
        <tissue>Pancreas</tissue>
        <tissue>Testis</tissue>
    </source>
</reference>
<reference key="4">
    <citation type="journal article" date="2013" name="Mol. Cell">
        <title>SIRT5-mediated lysine desuccinylation impacts diverse metabolic pathways.</title>
        <authorList>
            <person name="Park J."/>
            <person name="Chen Y."/>
            <person name="Tishkoff D.X."/>
            <person name="Peng C."/>
            <person name="Tan M."/>
            <person name="Dai L."/>
            <person name="Xie Z."/>
            <person name="Zhang Y."/>
            <person name="Zwaans B.M."/>
            <person name="Skinner M.E."/>
            <person name="Lombard D.B."/>
            <person name="Zhao Y."/>
        </authorList>
    </citation>
    <scope>SUCCINYLATION [LARGE SCALE ANALYSIS] AT LYS-93; LYS-138; LYS-274; LYS-286; LYS-333; LYS-458; LYS-523; LYS-535; LYS-584; LYS-732 AND LYS-761</scope>
    <scope>IDENTIFICATION BY MASS SPECTROMETRY [LARGE SCALE ANALYSIS]</scope>
    <source>
        <tissue>Liver</tissue>
    </source>
</reference>
<reference key="5">
    <citation type="journal article" date="2013" name="Proc. Natl. Acad. Sci. U.S.A.">
        <title>Label-free quantitative proteomics of the lysine acetylome in mitochondria identifies substrates of SIRT3 in metabolic pathways.</title>
        <authorList>
            <person name="Rardin M.J."/>
            <person name="Newman J.C."/>
            <person name="Held J.M."/>
            <person name="Cusack M.P."/>
            <person name="Sorensen D.J."/>
            <person name="Li B."/>
            <person name="Schilling B."/>
            <person name="Mooney S.D."/>
            <person name="Kahn C.R."/>
            <person name="Verdin E."/>
            <person name="Gibson B.W."/>
        </authorList>
    </citation>
    <scope>ACETYLATION [LARGE SCALE ANALYSIS] AT LYS-48; LYS-52; LYS-56; LYS-93; LYS-128; LYS-138; LYS-286; LYS-458; LYS-523; LYS-535; LYS-584; LYS-707; LYS-739; LYS-761; LYS-778 AND LYS-780</scope>
    <scope>IDENTIFICATION BY MASS SPECTROMETRY [LARGE SCALE ANALYSIS]</scope>
    <source>
        <tissue>Liver</tissue>
    </source>
</reference>
<dbReference type="EC" id="1.5.1.8" evidence="4"/>
<dbReference type="EC" id="1.5.1.9" evidence="4"/>
<dbReference type="EMBL" id="AJ224761">
    <property type="protein sequence ID" value="CAA12114.1"/>
    <property type="molecule type" value="mRNA"/>
</dbReference>
<dbReference type="EMBL" id="BC005420">
    <property type="protein sequence ID" value="AAH05420.1"/>
    <property type="molecule type" value="mRNA"/>
</dbReference>
<dbReference type="CCDS" id="CCDS19937.1"/>
<dbReference type="RefSeq" id="NP_038958.2">
    <property type="nucleotide sequence ID" value="NM_013930.4"/>
</dbReference>
<dbReference type="SMR" id="Q99K67"/>
<dbReference type="BioGRID" id="206032">
    <property type="interactions" value="1"/>
</dbReference>
<dbReference type="FunCoup" id="Q99K67">
    <property type="interactions" value="2019"/>
</dbReference>
<dbReference type="IntAct" id="Q99K67">
    <property type="interactions" value="1"/>
</dbReference>
<dbReference type="STRING" id="10090.ENSMUSP00000031707"/>
<dbReference type="GlyGen" id="Q99K67">
    <property type="glycosylation" value="2 sites, 1 O-linked glycan (1 site)"/>
</dbReference>
<dbReference type="iPTMnet" id="Q99K67"/>
<dbReference type="PhosphoSitePlus" id="Q99K67"/>
<dbReference type="SwissPalm" id="Q99K67"/>
<dbReference type="REPRODUCTION-2DPAGE" id="Q99K67"/>
<dbReference type="jPOST" id="Q99K67"/>
<dbReference type="PaxDb" id="10090-ENSMUSP00000031707"/>
<dbReference type="ProteomicsDB" id="285627"/>
<dbReference type="Antibodypedia" id="17598">
    <property type="antibodies" value="189 antibodies from 26 providers"/>
</dbReference>
<dbReference type="DNASU" id="30956"/>
<dbReference type="Ensembl" id="ENSMUST00000031707.14">
    <property type="protein sequence ID" value="ENSMUSP00000031707.8"/>
    <property type="gene ID" value="ENSMUSG00000029695.14"/>
</dbReference>
<dbReference type="GeneID" id="30956"/>
<dbReference type="KEGG" id="mmu:30956"/>
<dbReference type="UCSC" id="uc009bbc.2">
    <property type="organism name" value="mouse"/>
</dbReference>
<dbReference type="AGR" id="MGI:1353573"/>
<dbReference type="CTD" id="10157"/>
<dbReference type="MGI" id="MGI:1353573">
    <property type="gene designation" value="Aass"/>
</dbReference>
<dbReference type="VEuPathDB" id="HostDB:ENSMUSG00000029695"/>
<dbReference type="eggNOG" id="KOG0172">
    <property type="taxonomic scope" value="Eukaryota"/>
</dbReference>
<dbReference type="GeneTree" id="ENSGT00390000013249"/>
<dbReference type="HOGENOM" id="CLU_005231_0_1_1"/>
<dbReference type="InParanoid" id="Q99K67"/>
<dbReference type="OMA" id="TPHVHDI"/>
<dbReference type="OrthoDB" id="10059875at2759"/>
<dbReference type="PhylomeDB" id="Q99K67"/>
<dbReference type="TreeFam" id="TF105728"/>
<dbReference type="Reactome" id="R-MMU-71064">
    <property type="pathway name" value="Lysine catabolism"/>
</dbReference>
<dbReference type="UniPathway" id="UPA00868">
    <property type="reaction ID" value="UER00835"/>
</dbReference>
<dbReference type="UniPathway" id="UPA00868">
    <property type="reaction ID" value="UER00836"/>
</dbReference>
<dbReference type="BioGRID-ORCS" id="30956">
    <property type="hits" value="5 hits in 76 CRISPR screens"/>
</dbReference>
<dbReference type="PRO" id="PR:Q99K67"/>
<dbReference type="Proteomes" id="UP000000589">
    <property type="component" value="Chromosome 6"/>
</dbReference>
<dbReference type="RNAct" id="Q99K67">
    <property type="molecule type" value="protein"/>
</dbReference>
<dbReference type="Bgee" id="ENSMUSG00000029695">
    <property type="expression patterns" value="Expressed in submandibular gland and 167 other cell types or tissues"/>
</dbReference>
<dbReference type="ExpressionAtlas" id="Q99K67">
    <property type="expression patterns" value="baseline and differential"/>
</dbReference>
<dbReference type="GO" id="GO:0005739">
    <property type="term" value="C:mitochondrion"/>
    <property type="evidence" value="ECO:0000304"/>
    <property type="project" value="UniProtKB"/>
</dbReference>
<dbReference type="GO" id="GO:0047131">
    <property type="term" value="F:saccharopine dehydrogenase (NAD+, L-glutamate-forming) activity"/>
    <property type="evidence" value="ECO:0000314"/>
    <property type="project" value="UniProtKB"/>
</dbReference>
<dbReference type="GO" id="GO:0047130">
    <property type="term" value="F:saccharopine dehydrogenase (NADP+, L-lysine-forming) activity"/>
    <property type="evidence" value="ECO:0000314"/>
    <property type="project" value="UniProtKB"/>
</dbReference>
<dbReference type="GO" id="GO:0006091">
    <property type="term" value="P:generation of precursor metabolites and energy"/>
    <property type="evidence" value="ECO:0000304"/>
    <property type="project" value="UniProtKB"/>
</dbReference>
<dbReference type="GO" id="GO:0019477">
    <property type="term" value="P:L-lysine catabolic process"/>
    <property type="evidence" value="ECO:0000314"/>
    <property type="project" value="MGI"/>
</dbReference>
<dbReference type="GO" id="GO:0033512">
    <property type="term" value="P:L-lysine catabolic process to acetyl-CoA via saccharopine"/>
    <property type="evidence" value="ECO:0007669"/>
    <property type="project" value="UniProtKB-UniPathway"/>
</dbReference>
<dbReference type="CDD" id="cd12189">
    <property type="entry name" value="LKR_SDH_like"/>
    <property type="match status" value="1"/>
</dbReference>
<dbReference type="FunFam" id="1.10.1870.10:FF:000001">
    <property type="entry name" value="Alpha-aminoadipic semialdehyde synthase, mitochondrial"/>
    <property type="match status" value="1"/>
</dbReference>
<dbReference type="FunFam" id="3.30.360.10:FF:000008">
    <property type="entry name" value="Alpha-aminoadipic semialdehyde synthase, mitochondrial"/>
    <property type="match status" value="1"/>
</dbReference>
<dbReference type="FunFam" id="3.40.50.720:FF:000087">
    <property type="entry name" value="alpha-aminoadipic semialdehyde synthase, mitochondrial"/>
    <property type="match status" value="1"/>
</dbReference>
<dbReference type="FunFam" id="3.40.50.720:FF:000072">
    <property type="entry name" value="Saccharopine dehydrogenase [NADP(+), L-glutamate-forming]"/>
    <property type="match status" value="1"/>
</dbReference>
<dbReference type="Gene3D" id="3.30.360.10">
    <property type="entry name" value="Dihydrodipicolinate Reductase, domain 2"/>
    <property type="match status" value="1"/>
</dbReference>
<dbReference type="Gene3D" id="1.10.1870.10">
    <property type="entry name" value="Domain 3, Saccharopine reductase"/>
    <property type="match status" value="1"/>
</dbReference>
<dbReference type="Gene3D" id="3.40.50.720">
    <property type="entry name" value="NAD(P)-binding Rossmann-like Domain"/>
    <property type="match status" value="3"/>
</dbReference>
<dbReference type="InterPro" id="IPR051168">
    <property type="entry name" value="AASS"/>
</dbReference>
<dbReference type="InterPro" id="IPR007886">
    <property type="entry name" value="AlaDH/PNT_N"/>
</dbReference>
<dbReference type="InterPro" id="IPR007698">
    <property type="entry name" value="AlaDH/PNT_NAD(H)-bd"/>
</dbReference>
<dbReference type="InterPro" id="IPR036291">
    <property type="entry name" value="NAD(P)-bd_dom_sf"/>
</dbReference>
<dbReference type="InterPro" id="IPR032095">
    <property type="entry name" value="Sacchrp_dh-like_C"/>
</dbReference>
<dbReference type="InterPro" id="IPR005097">
    <property type="entry name" value="Sacchrp_dh_NADP-bd"/>
</dbReference>
<dbReference type="PANTHER" id="PTHR11133:SF22">
    <property type="entry name" value="ALPHA-AMINOADIPIC SEMIALDEHYDE SYNTHASE, MITOCHONDRIAL"/>
    <property type="match status" value="1"/>
</dbReference>
<dbReference type="PANTHER" id="PTHR11133">
    <property type="entry name" value="SACCHAROPINE DEHYDROGENASE"/>
    <property type="match status" value="1"/>
</dbReference>
<dbReference type="Pfam" id="PF05222">
    <property type="entry name" value="AlaDh_PNT_N"/>
    <property type="match status" value="1"/>
</dbReference>
<dbReference type="Pfam" id="PF16653">
    <property type="entry name" value="Sacchrp_dh_C"/>
    <property type="match status" value="1"/>
</dbReference>
<dbReference type="Pfam" id="PF03435">
    <property type="entry name" value="Sacchrp_dh_NADP"/>
    <property type="match status" value="1"/>
</dbReference>
<dbReference type="SMART" id="SM01002">
    <property type="entry name" value="AlaDh_PNT_C"/>
    <property type="match status" value="1"/>
</dbReference>
<dbReference type="SMART" id="SM01003">
    <property type="entry name" value="AlaDh_PNT_N"/>
    <property type="match status" value="1"/>
</dbReference>
<dbReference type="SUPFAM" id="SSF52283">
    <property type="entry name" value="Formate/glycerate dehydrogenase catalytic domain-like"/>
    <property type="match status" value="1"/>
</dbReference>
<dbReference type="SUPFAM" id="SSF55347">
    <property type="entry name" value="Glyceraldehyde-3-phosphate dehydrogenase-like, C-terminal domain"/>
    <property type="match status" value="1"/>
</dbReference>
<dbReference type="SUPFAM" id="SSF51735">
    <property type="entry name" value="NAD(P)-binding Rossmann-fold domains"/>
    <property type="match status" value="1"/>
</dbReference>
<proteinExistence type="evidence at protein level"/>
<gene>
    <name evidence="8" type="primary">Aass</name>
    <name type="synonym">Lorsdh</name>
</gene>
<keyword id="KW-0007">Acetylation</keyword>
<keyword id="KW-0496">Mitochondrion</keyword>
<keyword id="KW-0511">Multifunctional enzyme</keyword>
<keyword id="KW-0520">NAD</keyword>
<keyword id="KW-0521">NADP</keyword>
<keyword id="KW-0560">Oxidoreductase</keyword>
<keyword id="KW-1185">Reference proteome</keyword>
<keyword id="KW-0809">Transit peptide</keyword>
<name>AASS_MOUSE</name>